<reference key="1">
    <citation type="journal article" date="2008" name="J. Bacteriol.">
        <title>The complete genome sequence of Thermococcus onnurineus NA1 reveals a mixed heterotrophic and carboxydotrophic metabolism.</title>
        <authorList>
            <person name="Lee H.S."/>
            <person name="Kang S.G."/>
            <person name="Bae S.S."/>
            <person name="Lim J.K."/>
            <person name="Cho Y."/>
            <person name="Kim Y.J."/>
            <person name="Jeon J.H."/>
            <person name="Cha S.-S."/>
            <person name="Kwon K.K."/>
            <person name="Kim H.-T."/>
            <person name="Park C.-J."/>
            <person name="Lee H.-W."/>
            <person name="Kim S.I."/>
            <person name="Chun J."/>
            <person name="Colwell R.R."/>
            <person name="Kim S.-J."/>
            <person name="Lee J.-H."/>
        </authorList>
    </citation>
    <scope>NUCLEOTIDE SEQUENCE [LARGE SCALE GENOMIC DNA]</scope>
    <source>
        <strain>NA1</strain>
    </source>
</reference>
<dbReference type="EC" id="6.1.1.3" evidence="1"/>
<dbReference type="EMBL" id="CP000855">
    <property type="protein sequence ID" value="ACJ15861.1"/>
    <property type="molecule type" value="Genomic_DNA"/>
</dbReference>
<dbReference type="RefSeq" id="WP_012571333.1">
    <property type="nucleotide sequence ID" value="NC_011529.1"/>
</dbReference>
<dbReference type="SMR" id="B6YTH4"/>
<dbReference type="STRING" id="523850.TON_0376"/>
<dbReference type="GeneID" id="7016671"/>
<dbReference type="KEGG" id="ton:TON_0376"/>
<dbReference type="PATRIC" id="fig|523850.10.peg.379"/>
<dbReference type="eggNOG" id="arCOG00401">
    <property type="taxonomic scope" value="Archaea"/>
</dbReference>
<dbReference type="HOGENOM" id="CLU_029833_0_0_2"/>
<dbReference type="OrthoDB" id="372136at2157"/>
<dbReference type="Proteomes" id="UP000002727">
    <property type="component" value="Chromosome"/>
</dbReference>
<dbReference type="GO" id="GO:0005737">
    <property type="term" value="C:cytoplasm"/>
    <property type="evidence" value="ECO:0007669"/>
    <property type="project" value="UniProtKB-SubCell"/>
</dbReference>
<dbReference type="GO" id="GO:0005524">
    <property type="term" value="F:ATP binding"/>
    <property type="evidence" value="ECO:0007669"/>
    <property type="project" value="UniProtKB-UniRule"/>
</dbReference>
<dbReference type="GO" id="GO:0004829">
    <property type="term" value="F:threonine-tRNA ligase activity"/>
    <property type="evidence" value="ECO:0007669"/>
    <property type="project" value="UniProtKB-UniRule"/>
</dbReference>
<dbReference type="GO" id="GO:0000049">
    <property type="term" value="F:tRNA binding"/>
    <property type="evidence" value="ECO:0007669"/>
    <property type="project" value="UniProtKB-KW"/>
</dbReference>
<dbReference type="GO" id="GO:0008270">
    <property type="term" value="F:zinc ion binding"/>
    <property type="evidence" value="ECO:0007669"/>
    <property type="project" value="InterPro"/>
</dbReference>
<dbReference type="GO" id="GO:0006435">
    <property type="term" value="P:threonyl-tRNA aminoacylation"/>
    <property type="evidence" value="ECO:0007669"/>
    <property type="project" value="UniProtKB-UniRule"/>
</dbReference>
<dbReference type="CDD" id="cd00860">
    <property type="entry name" value="ThrRS_anticodon"/>
    <property type="match status" value="1"/>
</dbReference>
<dbReference type="CDD" id="cd00771">
    <property type="entry name" value="ThrRS_core"/>
    <property type="match status" value="1"/>
</dbReference>
<dbReference type="FunFam" id="3.30.930.10:FF:000076">
    <property type="entry name" value="Threonine--tRNA ligase"/>
    <property type="match status" value="1"/>
</dbReference>
<dbReference type="FunFam" id="3.40.50.800:FF:000001">
    <property type="entry name" value="Threonine--tRNA ligase"/>
    <property type="match status" value="1"/>
</dbReference>
<dbReference type="FunFam" id="3.50.80.10:FF:000004">
    <property type="entry name" value="Threonine--tRNA ligase"/>
    <property type="match status" value="1"/>
</dbReference>
<dbReference type="Gene3D" id="3.40.50.800">
    <property type="entry name" value="Anticodon-binding domain"/>
    <property type="match status" value="1"/>
</dbReference>
<dbReference type="Gene3D" id="3.30.930.10">
    <property type="entry name" value="Bira Bifunctional Protein, Domain 2"/>
    <property type="match status" value="1"/>
</dbReference>
<dbReference type="Gene3D" id="3.50.80.10">
    <property type="entry name" value="D-tyrosyl-tRNA(Tyr) deacylase"/>
    <property type="match status" value="1"/>
</dbReference>
<dbReference type="HAMAP" id="MF_00184">
    <property type="entry name" value="Thr_tRNA_synth"/>
    <property type="match status" value="1"/>
</dbReference>
<dbReference type="InterPro" id="IPR002314">
    <property type="entry name" value="aa-tRNA-synt_IIb"/>
</dbReference>
<dbReference type="InterPro" id="IPR006195">
    <property type="entry name" value="aa-tRNA-synth_II"/>
</dbReference>
<dbReference type="InterPro" id="IPR045864">
    <property type="entry name" value="aa-tRNA-synth_II/BPL/LPL"/>
</dbReference>
<dbReference type="InterPro" id="IPR004154">
    <property type="entry name" value="Anticodon-bd"/>
</dbReference>
<dbReference type="InterPro" id="IPR036621">
    <property type="entry name" value="Anticodon-bd_dom_sf"/>
</dbReference>
<dbReference type="InterPro" id="IPR023509">
    <property type="entry name" value="DTD-like_sf"/>
</dbReference>
<dbReference type="InterPro" id="IPR002320">
    <property type="entry name" value="Thr-tRNA-ligase_IIa"/>
</dbReference>
<dbReference type="InterPro" id="IPR015011">
    <property type="entry name" value="Threonyl-tRNA_syn_edit_dom_arc"/>
</dbReference>
<dbReference type="InterPro" id="IPR047246">
    <property type="entry name" value="ThrRS_anticodon"/>
</dbReference>
<dbReference type="InterPro" id="IPR033728">
    <property type="entry name" value="ThrRS_core"/>
</dbReference>
<dbReference type="NCBIfam" id="NF003068">
    <property type="entry name" value="PRK03991.1"/>
    <property type="match status" value="1"/>
</dbReference>
<dbReference type="NCBIfam" id="TIGR00418">
    <property type="entry name" value="thrS"/>
    <property type="match status" value="1"/>
</dbReference>
<dbReference type="PANTHER" id="PTHR11451:SF44">
    <property type="entry name" value="THREONINE--TRNA LIGASE, CHLOROPLASTIC_MITOCHONDRIAL 2"/>
    <property type="match status" value="1"/>
</dbReference>
<dbReference type="PANTHER" id="PTHR11451">
    <property type="entry name" value="THREONINE-TRNA LIGASE"/>
    <property type="match status" value="1"/>
</dbReference>
<dbReference type="Pfam" id="PF03129">
    <property type="entry name" value="HGTP_anticodon"/>
    <property type="match status" value="1"/>
</dbReference>
<dbReference type="Pfam" id="PF00587">
    <property type="entry name" value="tRNA-synt_2b"/>
    <property type="match status" value="1"/>
</dbReference>
<dbReference type="Pfam" id="PF08915">
    <property type="entry name" value="tRNA-Thr_ED"/>
    <property type="match status" value="1"/>
</dbReference>
<dbReference type="PRINTS" id="PR01047">
    <property type="entry name" value="TRNASYNTHTHR"/>
</dbReference>
<dbReference type="SUPFAM" id="SSF52954">
    <property type="entry name" value="Class II aaRS ABD-related"/>
    <property type="match status" value="1"/>
</dbReference>
<dbReference type="SUPFAM" id="SSF55681">
    <property type="entry name" value="Class II aaRS and biotin synthetases"/>
    <property type="match status" value="1"/>
</dbReference>
<dbReference type="PROSITE" id="PS50862">
    <property type="entry name" value="AA_TRNA_LIGASE_II"/>
    <property type="match status" value="1"/>
</dbReference>
<feature type="chain" id="PRO_1000098623" description="Threonine--tRNA ligase">
    <location>
        <begin position="1"/>
        <end position="627"/>
    </location>
</feature>
<feature type="region of interest" description="Editing domain" evidence="1">
    <location>
        <begin position="1"/>
        <end position="147"/>
    </location>
</feature>
<feature type="region of interest" description="Catalytic" evidence="1">
    <location>
        <begin position="208"/>
        <end position="507"/>
    </location>
</feature>
<feature type="binding site" evidence="1">
    <location>
        <position position="300"/>
    </location>
    <ligand>
        <name>Zn(2+)</name>
        <dbReference type="ChEBI" id="CHEBI:29105"/>
    </ligand>
</feature>
<feature type="binding site" evidence="1">
    <location>
        <position position="352"/>
    </location>
    <ligand>
        <name>Zn(2+)</name>
        <dbReference type="ChEBI" id="CHEBI:29105"/>
    </ligand>
</feature>
<feature type="binding site" evidence="1">
    <location>
        <position position="476"/>
    </location>
    <ligand>
        <name>Zn(2+)</name>
        <dbReference type="ChEBI" id="CHEBI:29105"/>
    </ligand>
</feature>
<protein>
    <recommendedName>
        <fullName evidence="1">Threonine--tRNA ligase</fullName>
        <ecNumber evidence="1">6.1.1.3</ecNumber>
    </recommendedName>
    <alternativeName>
        <fullName evidence="1">Threonyl-tRNA synthetase</fullName>
        <shortName evidence="1">ThrRS</shortName>
    </alternativeName>
</protein>
<name>SYT_THEON</name>
<comment type="function">
    <text evidence="1">Catalyzes the attachment of threonine to tRNA(Thr) in a two-step reaction: L-threonine is first activated by ATP to form Thr-AMP and then transferred to the acceptor end of tRNA(Thr). Also edits incorrectly charged L-seryl-tRNA(Thr).</text>
</comment>
<comment type="catalytic activity">
    <reaction evidence="1">
        <text>tRNA(Thr) + L-threonine + ATP = L-threonyl-tRNA(Thr) + AMP + diphosphate + H(+)</text>
        <dbReference type="Rhea" id="RHEA:24624"/>
        <dbReference type="Rhea" id="RHEA-COMP:9670"/>
        <dbReference type="Rhea" id="RHEA-COMP:9704"/>
        <dbReference type="ChEBI" id="CHEBI:15378"/>
        <dbReference type="ChEBI" id="CHEBI:30616"/>
        <dbReference type="ChEBI" id="CHEBI:33019"/>
        <dbReference type="ChEBI" id="CHEBI:57926"/>
        <dbReference type="ChEBI" id="CHEBI:78442"/>
        <dbReference type="ChEBI" id="CHEBI:78534"/>
        <dbReference type="ChEBI" id="CHEBI:456215"/>
        <dbReference type="EC" id="6.1.1.3"/>
    </reaction>
</comment>
<comment type="cofactor">
    <cofactor evidence="1">
        <name>Zn(2+)</name>
        <dbReference type="ChEBI" id="CHEBI:29105"/>
    </cofactor>
    <text evidence="1">Binds 1 zinc ion per subunit.</text>
</comment>
<comment type="subunit">
    <text evidence="1">Homodimer.</text>
</comment>
<comment type="subcellular location">
    <subcellularLocation>
        <location evidence="1">Cytoplasm</location>
    </subcellularLocation>
</comment>
<comment type="domain">
    <text evidence="1">The N-terminal domain is an archaea-specific tRNA-editing domain that hydrolyzes incorrectly charged L-seryl-tRNA(Thr). Catalysis of tRNA editing is performed by the charged tRNA itself.</text>
</comment>
<comment type="similarity">
    <text evidence="1">Belongs to the class-II aminoacyl-tRNA synthetase family.</text>
</comment>
<gene>
    <name evidence="1" type="primary">thrS</name>
    <name type="ordered locus">TON_0376</name>
</gene>
<proteinExistence type="inferred from homology"/>
<organism>
    <name type="scientific">Thermococcus onnurineus (strain NA1)</name>
    <dbReference type="NCBI Taxonomy" id="523850"/>
    <lineage>
        <taxon>Archaea</taxon>
        <taxon>Methanobacteriati</taxon>
        <taxon>Methanobacteriota</taxon>
        <taxon>Thermococci</taxon>
        <taxon>Thermococcales</taxon>
        <taxon>Thermococcaceae</taxon>
        <taxon>Thermococcus</taxon>
    </lineage>
</organism>
<evidence type="ECO:0000255" key="1">
    <source>
        <dbReference type="HAMAP-Rule" id="MF_00184"/>
    </source>
</evidence>
<accession>B6YTH4</accession>
<keyword id="KW-0030">Aminoacyl-tRNA synthetase</keyword>
<keyword id="KW-0067">ATP-binding</keyword>
<keyword id="KW-0963">Cytoplasm</keyword>
<keyword id="KW-0436">Ligase</keyword>
<keyword id="KW-0479">Metal-binding</keyword>
<keyword id="KW-0547">Nucleotide-binding</keyword>
<keyword id="KW-0648">Protein biosynthesis</keyword>
<keyword id="KW-0694">RNA-binding</keyword>
<keyword id="KW-0820">tRNA-binding</keyword>
<keyword id="KW-0862">Zinc</keyword>
<sequence>MRMLLIHSDYLEYEVKDKALKNPEPISEEQKKGRLEEVLAVFISVEKVDETNPDEVVEKAVNEIKDVASQVKAENVFVYPFAHLSSELAKPDIALEVLREVEEKLREEGFNVKRAPFGYYKAFKLSCKGHPLAELSRTIVPSGEAKAEEEIPEALKKEEEELVSYWYILTPEGELIEVDKFDFTGHENLRKFANYEISKSRIADREPPHVRIMLEQELVDYEPGSDPGNLRYYPKGRLIKGLLEQYVTEKVVEYGAMEVETPIMYDFEHPALEKYLNRFPARQYIVKSGDKKFFLRFAACFGQFLIKKDAIISYRNLPLRMYELTRYSFRREKSGELSGLRRLRAFTMPDMHTVARDLKQAMAEFKKQYKLSMEVLKGVGLTPEDYEVAIRFTEDFWNENRDFIVELAKIIGKPVLIEMWKQRFFYFILKFEFNFVDNLDKAAALSTVQIDVENAERFGITYYDEDGKEKYPLILHCSPSGAIERVMYAILEKQAKLQSKGIKPMFPLWLSPIQVRVIPVSEEVLDYALYVAGKLEGAKIRVDVDDTSDRLNKKIRKAEKEWIPYVIVVGRNEKEQNTITVRRRSDGKQGEMQLEDLIREIRSQTEGFPYKPRPLPLLLSKRPKFRG</sequence>